<accession>B3P7F8</accession>
<dbReference type="EC" id="3.1.-.-" evidence="3"/>
<dbReference type="EMBL" id="CH954182">
    <property type="protein sequence ID" value="EDV54047.1"/>
    <property type="molecule type" value="Genomic_DNA"/>
</dbReference>
<dbReference type="BMRB" id="B3P7F8"/>
<dbReference type="SMR" id="B3P7F8"/>
<dbReference type="MEROPS" id="C46.001"/>
<dbReference type="EnsemblMetazoa" id="FBtr0132512">
    <property type="protein sequence ID" value="FBpp0131004"/>
    <property type="gene ID" value="FBgn0104746"/>
</dbReference>
<dbReference type="EnsemblMetazoa" id="XM_001982141.3">
    <property type="protein sequence ID" value="XP_001982177.1"/>
    <property type="gene ID" value="LOC6554619"/>
</dbReference>
<dbReference type="GeneID" id="6554619"/>
<dbReference type="KEGG" id="der:6554619"/>
<dbReference type="CTD" id="42737"/>
<dbReference type="eggNOG" id="KOG3638">
    <property type="taxonomic scope" value="Eukaryota"/>
</dbReference>
<dbReference type="HOGENOM" id="CLU_034686_0_0_1"/>
<dbReference type="OMA" id="HWVSSLL"/>
<dbReference type="OrthoDB" id="5212at2759"/>
<dbReference type="PhylomeDB" id="B3P7F8"/>
<dbReference type="Proteomes" id="UP000008711">
    <property type="component" value="Unassembled WGS sequence"/>
</dbReference>
<dbReference type="GO" id="GO:0030139">
    <property type="term" value="C:endocytic vesicle"/>
    <property type="evidence" value="ECO:0007669"/>
    <property type="project" value="EnsemblMetazoa"/>
</dbReference>
<dbReference type="GO" id="GO:0005768">
    <property type="term" value="C:endosome"/>
    <property type="evidence" value="ECO:0007669"/>
    <property type="project" value="EnsemblMetazoa"/>
</dbReference>
<dbReference type="GO" id="GO:0005615">
    <property type="term" value="C:extracellular space"/>
    <property type="evidence" value="ECO:0007669"/>
    <property type="project" value="EnsemblMetazoa"/>
</dbReference>
<dbReference type="GO" id="GO:0005634">
    <property type="term" value="C:nucleus"/>
    <property type="evidence" value="ECO:0007669"/>
    <property type="project" value="UniProtKB-SubCell"/>
</dbReference>
<dbReference type="GO" id="GO:0005886">
    <property type="term" value="C:plasma membrane"/>
    <property type="evidence" value="ECO:0007669"/>
    <property type="project" value="UniProtKB-SubCell"/>
</dbReference>
<dbReference type="GO" id="GO:0005509">
    <property type="term" value="F:calcium ion binding"/>
    <property type="evidence" value="ECO:0007669"/>
    <property type="project" value="TreeGrafter"/>
</dbReference>
<dbReference type="GO" id="GO:0140853">
    <property type="term" value="F:cholesterol-protein transferase activity"/>
    <property type="evidence" value="ECO:0000250"/>
    <property type="project" value="UniProtKB"/>
</dbReference>
<dbReference type="GO" id="GO:0016015">
    <property type="term" value="F:morphogen activity"/>
    <property type="evidence" value="ECO:0007669"/>
    <property type="project" value="UniProtKB-KW"/>
</dbReference>
<dbReference type="GO" id="GO:0005113">
    <property type="term" value="F:patched binding"/>
    <property type="evidence" value="ECO:0007669"/>
    <property type="project" value="EnsemblMetazoa"/>
</dbReference>
<dbReference type="GO" id="GO:0008233">
    <property type="term" value="F:peptidase activity"/>
    <property type="evidence" value="ECO:0000250"/>
    <property type="project" value="UniProtKB"/>
</dbReference>
<dbReference type="GO" id="GO:0001746">
    <property type="term" value="P:Bolwig's organ morphogenesis"/>
    <property type="evidence" value="ECO:0007669"/>
    <property type="project" value="EnsemblMetazoa"/>
</dbReference>
<dbReference type="GO" id="GO:0007267">
    <property type="term" value="P:cell-cell signaling"/>
    <property type="evidence" value="ECO:0007669"/>
    <property type="project" value="InterPro"/>
</dbReference>
<dbReference type="GO" id="GO:0035231">
    <property type="term" value="P:cytoneme assembly"/>
    <property type="evidence" value="ECO:0007669"/>
    <property type="project" value="EnsemblMetazoa"/>
</dbReference>
<dbReference type="GO" id="GO:0007427">
    <property type="term" value="P:epithelial cell migration, open tracheal system"/>
    <property type="evidence" value="ECO:0007669"/>
    <property type="project" value="EnsemblMetazoa"/>
</dbReference>
<dbReference type="GO" id="GO:0035224">
    <property type="term" value="P:genital disc anterior/posterior pattern formation"/>
    <property type="evidence" value="ECO:0007669"/>
    <property type="project" value="EnsemblMetazoa"/>
</dbReference>
<dbReference type="GO" id="GO:0008354">
    <property type="term" value="P:germ cell migration"/>
    <property type="evidence" value="ECO:0007669"/>
    <property type="project" value="EnsemblMetazoa"/>
</dbReference>
<dbReference type="GO" id="GO:0008347">
    <property type="term" value="P:glial cell migration"/>
    <property type="evidence" value="ECO:0007669"/>
    <property type="project" value="EnsemblMetazoa"/>
</dbReference>
<dbReference type="GO" id="GO:0007506">
    <property type="term" value="P:gonadal mesoderm development"/>
    <property type="evidence" value="ECO:0007669"/>
    <property type="project" value="EnsemblMetazoa"/>
</dbReference>
<dbReference type="GO" id="GO:0007442">
    <property type="term" value="P:hindgut morphogenesis"/>
    <property type="evidence" value="ECO:0007669"/>
    <property type="project" value="EnsemblMetazoa"/>
</dbReference>
<dbReference type="GO" id="GO:0007476">
    <property type="term" value="P:imaginal disc-derived wing morphogenesis"/>
    <property type="evidence" value="ECO:0007669"/>
    <property type="project" value="EnsemblMetazoa"/>
</dbReference>
<dbReference type="GO" id="GO:0016539">
    <property type="term" value="P:intein-mediated protein splicing"/>
    <property type="evidence" value="ECO:0007669"/>
    <property type="project" value="InterPro"/>
</dbReference>
<dbReference type="GO" id="GO:0035217">
    <property type="term" value="P:labial disc development"/>
    <property type="evidence" value="ECO:0007669"/>
    <property type="project" value="EnsemblMetazoa"/>
</dbReference>
<dbReference type="GO" id="GO:0016335">
    <property type="term" value="P:morphogenesis of larval imaginal disc epithelium"/>
    <property type="evidence" value="ECO:0007669"/>
    <property type="project" value="EnsemblMetazoa"/>
</dbReference>
<dbReference type="GO" id="GO:0002385">
    <property type="term" value="P:mucosal immune response"/>
    <property type="evidence" value="ECO:0007669"/>
    <property type="project" value="EnsemblMetazoa"/>
</dbReference>
<dbReference type="GO" id="GO:0034111">
    <property type="term" value="P:negative regulation of homotypic cell-cell adhesion"/>
    <property type="evidence" value="ECO:0007669"/>
    <property type="project" value="EnsemblMetazoa"/>
</dbReference>
<dbReference type="GO" id="GO:0045861">
    <property type="term" value="P:negative regulation of proteolysis"/>
    <property type="evidence" value="ECO:0007669"/>
    <property type="project" value="EnsemblMetazoa"/>
</dbReference>
<dbReference type="GO" id="GO:0002052">
    <property type="term" value="P:positive regulation of neuroblast proliferation"/>
    <property type="evidence" value="ECO:0007669"/>
    <property type="project" value="EnsemblMetazoa"/>
</dbReference>
<dbReference type="GO" id="GO:2000010">
    <property type="term" value="P:positive regulation of protein localization to cell surface"/>
    <property type="evidence" value="ECO:0007669"/>
    <property type="project" value="EnsemblMetazoa"/>
</dbReference>
<dbReference type="GO" id="GO:0007458">
    <property type="term" value="P:progression of morphogenetic furrow involved in compound eye morphogenesis"/>
    <property type="evidence" value="ECO:0007669"/>
    <property type="project" value="EnsemblMetazoa"/>
</dbReference>
<dbReference type="GO" id="GO:0016540">
    <property type="term" value="P:protein autoprocessing"/>
    <property type="evidence" value="ECO:0007669"/>
    <property type="project" value="EnsemblMetazoa"/>
</dbReference>
<dbReference type="GO" id="GO:2000495">
    <property type="term" value="P:regulation of cell proliferation involved in compound eye morphogenesis"/>
    <property type="evidence" value="ECO:0007669"/>
    <property type="project" value="EnsemblMetazoa"/>
</dbReference>
<dbReference type="GO" id="GO:2000274">
    <property type="term" value="P:regulation of epithelial cell migration, open tracheal system"/>
    <property type="evidence" value="ECO:0007669"/>
    <property type="project" value="EnsemblMetazoa"/>
</dbReference>
<dbReference type="GO" id="GO:0010468">
    <property type="term" value="P:regulation of gene expression"/>
    <property type="evidence" value="ECO:0007669"/>
    <property type="project" value="TreeGrafter"/>
</dbReference>
<dbReference type="GO" id="GO:0007346">
    <property type="term" value="P:regulation of mitotic cell cycle"/>
    <property type="evidence" value="ECO:0007669"/>
    <property type="project" value="EnsemblMetazoa"/>
</dbReference>
<dbReference type="GO" id="GO:0007367">
    <property type="term" value="P:segment polarity determination"/>
    <property type="evidence" value="ECO:0000250"/>
    <property type="project" value="UniProtKB"/>
</dbReference>
<dbReference type="GO" id="GO:0097264">
    <property type="term" value="P:self proteolysis"/>
    <property type="evidence" value="ECO:0000250"/>
    <property type="project" value="UniProtKB"/>
</dbReference>
<dbReference type="GO" id="GO:0007224">
    <property type="term" value="P:smoothened signaling pathway"/>
    <property type="evidence" value="ECO:0007669"/>
    <property type="project" value="EnsemblMetazoa"/>
</dbReference>
<dbReference type="GO" id="GO:0035277">
    <property type="term" value="P:spiracle morphogenesis, open tracheal system"/>
    <property type="evidence" value="ECO:0007669"/>
    <property type="project" value="EnsemblMetazoa"/>
</dbReference>
<dbReference type="GO" id="GO:0035154">
    <property type="term" value="P:terminal cell fate specification, open tracheal system"/>
    <property type="evidence" value="ECO:0007669"/>
    <property type="project" value="EnsemblMetazoa"/>
</dbReference>
<dbReference type="GO" id="GO:0007418">
    <property type="term" value="P:ventral midline development"/>
    <property type="evidence" value="ECO:0007669"/>
    <property type="project" value="EnsemblMetazoa"/>
</dbReference>
<dbReference type="GO" id="GO:0035222">
    <property type="term" value="P:wing disc pattern formation"/>
    <property type="evidence" value="ECO:0007669"/>
    <property type="project" value="EnsemblMetazoa"/>
</dbReference>
<dbReference type="CDD" id="cd00081">
    <property type="entry name" value="Hint"/>
    <property type="match status" value="1"/>
</dbReference>
<dbReference type="FunFam" id="2.170.16.10:FF:000001">
    <property type="entry name" value="Indian hedgehog"/>
    <property type="match status" value="1"/>
</dbReference>
<dbReference type="FunFam" id="3.30.1380.10:FF:000001">
    <property type="entry name" value="Indian hedgehog"/>
    <property type="match status" value="1"/>
</dbReference>
<dbReference type="Gene3D" id="3.30.1380.10">
    <property type="match status" value="1"/>
</dbReference>
<dbReference type="Gene3D" id="2.170.16.10">
    <property type="entry name" value="Hedgehog/Intein (Hint) domain"/>
    <property type="match status" value="1"/>
</dbReference>
<dbReference type="InterPro" id="IPR001657">
    <property type="entry name" value="Hedgehog"/>
</dbReference>
<dbReference type="InterPro" id="IPR001767">
    <property type="entry name" value="Hedgehog_Hint"/>
</dbReference>
<dbReference type="InterPro" id="IPR009045">
    <property type="entry name" value="Hedgehog_sig/DD-Pept_Zn-bd_sf"/>
</dbReference>
<dbReference type="InterPro" id="IPR050387">
    <property type="entry name" value="Hedgehog_Signaling"/>
</dbReference>
<dbReference type="InterPro" id="IPR000320">
    <property type="entry name" value="Hedgehog_signalling_dom"/>
</dbReference>
<dbReference type="InterPro" id="IPR003586">
    <property type="entry name" value="Hint_dom_C"/>
</dbReference>
<dbReference type="InterPro" id="IPR003587">
    <property type="entry name" value="Hint_dom_N"/>
</dbReference>
<dbReference type="InterPro" id="IPR036844">
    <property type="entry name" value="Hint_dom_sf"/>
</dbReference>
<dbReference type="InterPro" id="IPR006141">
    <property type="entry name" value="Intein_N"/>
</dbReference>
<dbReference type="PANTHER" id="PTHR11889">
    <property type="entry name" value="HEDGEHOG"/>
    <property type="match status" value="1"/>
</dbReference>
<dbReference type="PANTHER" id="PTHR11889:SF31">
    <property type="entry name" value="PROTEIN HEDGEHOG"/>
    <property type="match status" value="1"/>
</dbReference>
<dbReference type="Pfam" id="PF01085">
    <property type="entry name" value="HH_signal"/>
    <property type="match status" value="1"/>
</dbReference>
<dbReference type="Pfam" id="PF01079">
    <property type="entry name" value="Hint"/>
    <property type="match status" value="1"/>
</dbReference>
<dbReference type="PIRSF" id="PIRSF009400">
    <property type="entry name" value="Peptidase_C46"/>
    <property type="match status" value="1"/>
</dbReference>
<dbReference type="PRINTS" id="PR00632">
    <property type="entry name" value="SONICHHOG"/>
</dbReference>
<dbReference type="SMART" id="SM00305">
    <property type="entry name" value="HintC"/>
    <property type="match status" value="1"/>
</dbReference>
<dbReference type="SMART" id="SM00306">
    <property type="entry name" value="HintN"/>
    <property type="match status" value="1"/>
</dbReference>
<dbReference type="SUPFAM" id="SSF55166">
    <property type="entry name" value="Hedgehog/DD-peptidase"/>
    <property type="match status" value="1"/>
</dbReference>
<dbReference type="SUPFAM" id="SSF51294">
    <property type="entry name" value="Hedgehog/intein (Hint) domain"/>
    <property type="match status" value="1"/>
</dbReference>
<dbReference type="PROSITE" id="PS50817">
    <property type="entry name" value="INTEIN_N_TER"/>
    <property type="match status" value="1"/>
</dbReference>
<organism>
    <name type="scientific">Drosophila erecta</name>
    <name type="common">Fruit fly</name>
    <dbReference type="NCBI Taxonomy" id="7220"/>
    <lineage>
        <taxon>Eukaryota</taxon>
        <taxon>Metazoa</taxon>
        <taxon>Ecdysozoa</taxon>
        <taxon>Arthropoda</taxon>
        <taxon>Hexapoda</taxon>
        <taxon>Insecta</taxon>
        <taxon>Pterygota</taxon>
        <taxon>Neoptera</taxon>
        <taxon>Endopterygota</taxon>
        <taxon>Diptera</taxon>
        <taxon>Brachycera</taxon>
        <taxon>Muscomorpha</taxon>
        <taxon>Ephydroidea</taxon>
        <taxon>Drosophilidae</taxon>
        <taxon>Drosophila</taxon>
        <taxon>Sophophora</taxon>
    </lineage>
</organism>
<gene>
    <name evidence="1" type="primary">hh</name>
    <name type="ORF">GG12458</name>
</gene>
<comment type="function">
    <molecule>Protein hedgehog</molecule>
    <text evidence="1 3">The C-terminal part of the hedgehog protein precursor displays an autoproteolysis activity that results in the cleavage of the full-length protein into two parts (N-product and C-product) (By similarity). In addition, the C-terminal part displays a cholesterol transferase activity that results by the covalent attachment of a cholesterol moiety to the C-terminal of the newly generated N-product (By similarity). Once cleaved, the C-product has no signaling activity and diffuses from the cell (By similarity).</text>
</comment>
<comment type="function">
    <molecule>Protein hedgehog N-product</molecule>
    <text evidence="1">The dually lipidated hedgehog protein N-product is a morphogen which is essential for a variety of patterning events during development. Establishes the anterior-posterior axis of the embryonic segments and patterns the larval imaginal disks. Binds to the patched (ptc) receptor, which functions in association with smoothened (smo), to activate the transcription of target genes wingless (wg), decapentaplegic (dpp) and ptc. In the absence of hh, ptc represses the constitutive signaling activity of smo through fused (fu). Essential component of a signaling pathway which regulates the Duox-dependent gut immune response to bacterial uracil; required to activate Cad99C-dependent endosome formation, norpA-dependent Ca2+ mobilization and p38 MAPK, which are essential steps in the Duox-dependent production of reactive oxygen species (ROS) in response to intestinal bacterial infection. During photoreceptor differentiation, it up-regulates transcription of Ubr3, which in turn promotes the hh-signaling pathway by mediating the ubiquitination and degradation of cos.</text>
</comment>
<comment type="catalytic activity">
    <molecule>Protein hedgehog</molecule>
    <reaction evidence="3">
        <text>glycyl-L-cysteinyl-[protein] + cholesterol + H(+) = [protein]-C-terminal glycyl cholesterol ester + N-terminal L-cysteinyl-[protein]</text>
        <dbReference type="Rhea" id="RHEA:59504"/>
        <dbReference type="Rhea" id="RHEA-COMP:12707"/>
        <dbReference type="Rhea" id="RHEA-COMP:15369"/>
        <dbReference type="Rhea" id="RHEA-COMP:15374"/>
        <dbReference type="ChEBI" id="CHEBI:15378"/>
        <dbReference type="ChEBI" id="CHEBI:16113"/>
        <dbReference type="ChEBI" id="CHEBI:65250"/>
        <dbReference type="ChEBI" id="CHEBI:143135"/>
        <dbReference type="ChEBI" id="CHEBI:143140"/>
    </reaction>
    <physiologicalReaction direction="left-to-right" evidence="3">
        <dbReference type="Rhea" id="RHEA:59505"/>
    </physiologicalReaction>
</comment>
<comment type="subunit">
    <text evidence="1">Interacts with shf.</text>
</comment>
<comment type="subcellular location">
    <subcellularLocation>
        <location evidence="1">Nucleus</location>
    </subcellularLocation>
    <subcellularLocation>
        <location evidence="1">Cytoplasm</location>
    </subcellularLocation>
    <text evidence="1">Nuclear up to embryonic stage 10 and then at stage 11 shifts to the cytoplasm. Also secreted in either cleaved or uncleaved form to mediate signaling to other cells.</text>
</comment>
<comment type="subcellular location">
    <molecule>Protein hedgehog N-product</molecule>
    <subcellularLocation>
        <location evidence="1">Cell membrane</location>
        <topology evidence="1">Lipid-anchor</topology>
    </subcellularLocation>
    <text evidence="1">The N-terminal peptide remains associated with the cell surface. Heparan sulfate proteoglycans of the extracellular matrix play an essential role in diffusion. Lipophorin is required for diffusion, probably by acting as vehicle for its movement, explaining how it can spread over long distances despite its lipidation.</text>
</comment>
<comment type="PTM">
    <molecule>Protein hedgehog</molecule>
    <text evidence="1 2 3">The C-terminal part of the hedgehog protein precursor displays an autoproteolysis activity that results in the cleavage of the full-length protein into two parts (N-product and C-product) (By similarity). In addition, the C-terminal part displays a cholesterol transferase activity that results by the covalent attachment of a cholesterol moiety to the C-terminal of the newly generated N-product (By similarity). The N-product is the active species in both local and long-range signaling, whereas the C-product has no signaling activity (By similarity).</text>
</comment>
<comment type="PTM">
    <molecule>Protein hedgehog N-product</molecule>
    <text evidence="3">Cholesterylation is required for N-product targeting to lipid rafts and multimerization.</text>
</comment>
<comment type="PTM">
    <molecule>Protein hedgehog N-product</molecule>
    <text evidence="1">N-palmitoylation by Rasp of the hedgehog N-product, within the secretory pathway, is required for the embryonic and larval patterning activities of the hedgehog signal.</text>
</comment>
<comment type="similarity">
    <text evidence="4">Belongs to the hedgehog family.</text>
</comment>
<feature type="signal peptide" evidence="4">
    <location>
        <begin position="1"/>
        <end status="unknown"/>
    </location>
</feature>
<feature type="propeptide" id="PRO_0000383054" evidence="4">
    <location>
        <begin status="unknown"/>
        <end position="78"/>
    </location>
</feature>
<feature type="chain" id="PRO_0000383055" description="Protein hedgehog" evidence="1">
    <location>
        <begin position="79"/>
        <end position="465"/>
    </location>
</feature>
<feature type="chain" id="PRO_0000383056" description="Protein hedgehog N-product" evidence="1">
    <location>
        <begin position="79"/>
        <end position="251"/>
    </location>
</feature>
<feature type="binding site" evidence="2">
    <location>
        <position position="143"/>
    </location>
    <ligand>
        <name>Ca(2+)</name>
        <dbReference type="ChEBI" id="CHEBI:29108"/>
        <label>1</label>
    </ligand>
</feature>
<feature type="binding site" evidence="2">
    <location>
        <position position="144"/>
    </location>
    <ligand>
        <name>Ca(2+)</name>
        <dbReference type="ChEBI" id="CHEBI:29108"/>
        <label>1</label>
    </ligand>
</feature>
<feature type="binding site" evidence="2">
    <location>
        <position position="144"/>
    </location>
    <ligand>
        <name>Ca(2+)</name>
        <dbReference type="ChEBI" id="CHEBI:29108"/>
        <label>2</label>
    </ligand>
</feature>
<feature type="binding site" evidence="2">
    <location>
        <position position="149"/>
    </location>
    <ligand>
        <name>Ca(2+)</name>
        <dbReference type="ChEBI" id="CHEBI:29108"/>
        <label>1</label>
    </ligand>
</feature>
<feature type="binding site" evidence="2">
    <location>
        <position position="179"/>
    </location>
    <ligand>
        <name>Ca(2+)</name>
        <dbReference type="ChEBI" id="CHEBI:29108"/>
        <label>1</label>
    </ligand>
</feature>
<feature type="binding site" evidence="2">
    <location>
        <position position="180"/>
    </location>
    <ligand>
        <name>Ca(2+)</name>
        <dbReference type="ChEBI" id="CHEBI:29108"/>
        <label>1</label>
    </ligand>
</feature>
<feature type="binding site" evidence="2">
    <location>
        <position position="180"/>
    </location>
    <ligand>
        <name>Ca(2+)</name>
        <dbReference type="ChEBI" id="CHEBI:29108"/>
        <label>2</label>
    </ligand>
</feature>
<feature type="binding site" evidence="2">
    <location>
        <position position="183"/>
    </location>
    <ligand>
        <name>Ca(2+)</name>
        <dbReference type="ChEBI" id="CHEBI:29108"/>
        <label>2</label>
    </ligand>
</feature>
<feature type="binding site" evidence="2">
    <location>
        <position position="185"/>
    </location>
    <ligand>
        <name>Ca(2+)</name>
        <dbReference type="ChEBI" id="CHEBI:29108"/>
        <label>2</label>
    </ligand>
</feature>
<feature type="site" description="Cleavage; by autolysis" evidence="1">
    <location>
        <begin position="251"/>
        <end position="252"/>
    </location>
</feature>
<feature type="site" description="Involved in cholesterol transfer" evidence="1">
    <location>
        <position position="297"/>
    </location>
</feature>
<feature type="site" description="Involved in auto-cleavage" evidence="1">
    <location>
        <position position="320"/>
    </location>
</feature>
<feature type="site" description="Essential for auto-cleavage" evidence="1">
    <location>
        <position position="323"/>
    </location>
</feature>
<feature type="lipid moiety-binding region" description="N-palmitoyl cysteine" evidence="1">
    <location>
        <position position="79"/>
    </location>
</feature>
<feature type="lipid moiety-binding region" description="Cholesterol glycine ester" evidence="1">
    <location>
        <position position="251"/>
    </location>
</feature>
<reference evidence="5" key="1">
    <citation type="journal article" date="2007" name="Nature">
        <title>Evolution of genes and genomes on the Drosophila phylogeny.</title>
        <authorList>
            <consortium name="Drosophila 12 genomes consortium"/>
        </authorList>
    </citation>
    <scope>NUCLEOTIDE SEQUENCE [LARGE SCALE GENOMIC DNA]</scope>
    <source>
        <strain evidence="5">Tucson 14021-0224.01</strain>
    </source>
</reference>
<proteinExistence type="inferred from homology"/>
<keyword id="KW-0068">Autocatalytic cleavage</keyword>
<keyword id="KW-0106">Calcium</keyword>
<keyword id="KW-1003">Cell membrane</keyword>
<keyword id="KW-0963">Cytoplasm</keyword>
<keyword id="KW-0217">Developmental protein</keyword>
<keyword id="KW-0378">Hydrolase</keyword>
<keyword id="KW-0449">Lipoprotein</keyword>
<keyword id="KW-0472">Membrane</keyword>
<keyword id="KW-0479">Metal-binding</keyword>
<keyword id="KW-0504">Morphogen</keyword>
<keyword id="KW-0539">Nucleus</keyword>
<keyword id="KW-0564">Palmitate</keyword>
<keyword id="KW-0645">Protease</keyword>
<keyword id="KW-0709">Segmentation polarity protein</keyword>
<keyword id="KW-0732">Signal</keyword>
<keyword id="KW-0808">Transferase</keyword>
<name>HH_DROER</name>
<protein>
    <recommendedName>
        <fullName evidence="1">Protein hedgehog</fullName>
        <ecNumber evidence="3">3.1.-.-</ecNumber>
    </recommendedName>
    <component>
        <recommendedName>
            <fullName evidence="1">Protein hedgehog N-product</fullName>
        </recommendedName>
    </component>
</protein>
<evidence type="ECO:0000250" key="1">
    <source>
        <dbReference type="UniProtKB" id="Q02936"/>
    </source>
</evidence>
<evidence type="ECO:0000250" key="2">
    <source>
        <dbReference type="UniProtKB" id="Q15465"/>
    </source>
</evidence>
<evidence type="ECO:0000250" key="3">
    <source>
        <dbReference type="UniProtKB" id="Q62226"/>
    </source>
</evidence>
<evidence type="ECO:0000255" key="4"/>
<evidence type="ECO:0000312" key="5">
    <source>
        <dbReference type="EMBL" id="EDV54047.1"/>
    </source>
</evidence>
<sequence length="465" mass="51569">MDNTSSVPWASAASVTCLSLDAKCHSSSAKSAASSISASPETQAMRHIAHTQRCLSRLTSLVALLLIVLPMTFSPAHSCGPGRGLGRHRARNLYPLVLKQTIPNLSEYTNSASGPLEGVIRRDSPKFKDLVPNYNRDILFRDEEGTGADRLMSKRCREKLNLLAYSVMNEWPGIRLLVTESWDEDYHHGQESLHYEGRAVTIATSDRDQSKYGMLARLAVEAGFDWVSYVSRRHIYCSVKSDSSISSHVHGCFTPESTALLENGVRKPLGELSIGDRVLSMTANGQAVYSEVILFMDRNLEQMQNFVQLHTDGEAVLTVTPAHLVSVWQAESQKLTFVFADRVEEKNQVLVRDVETGELRPQRVVKVGSVRSKGVVAPLTREGTIVVNSVAASCYAVINSQSLAHWGLAPMRLLSTLEAWLPAKEQLHSSPKVVTTAEQQNGIHWYANALYKVKDYVLPQSWRHD</sequence>